<sequence>MSEYLLLLISTVLVNNFVLVKFLGLCPFMGVSSKLESAIGMSMATTFVLTLASILSYLVNQYLLLPFDLGYLRTMSFILVIAVVVQFTEMVVQKTSAALHRALGIYLPLITTNCAVLGVALLNVNEKHDFIQSAIYGFGAAVGFSLVLILFSAMRERLAAADVPEPFKGGAIAMITAGLMSLAFMGFTGLVK</sequence>
<protein>
    <recommendedName>
        <fullName evidence="1">Ion-translocating oxidoreductase complex subunit A</fullName>
        <ecNumber evidence="1">7.-.-.-</ecNumber>
    </recommendedName>
    <alternativeName>
        <fullName evidence="1">Rnf electron transport complex subunit A</fullName>
    </alternativeName>
</protein>
<evidence type="ECO:0000255" key="1">
    <source>
        <dbReference type="HAMAP-Rule" id="MF_00459"/>
    </source>
</evidence>
<reference key="1">
    <citation type="journal article" date="2002" name="Nat. Biotechnol.">
        <title>Genome sequence of the dissimilatory metal ion-reducing bacterium Shewanella oneidensis.</title>
        <authorList>
            <person name="Heidelberg J.F."/>
            <person name="Paulsen I.T."/>
            <person name="Nelson K.E."/>
            <person name="Gaidos E.J."/>
            <person name="Nelson W.C."/>
            <person name="Read T.D."/>
            <person name="Eisen J.A."/>
            <person name="Seshadri R."/>
            <person name="Ward N.L."/>
            <person name="Methe B.A."/>
            <person name="Clayton R.A."/>
            <person name="Meyer T."/>
            <person name="Tsapin A."/>
            <person name="Scott J."/>
            <person name="Beanan M.J."/>
            <person name="Brinkac L.M."/>
            <person name="Daugherty S.C."/>
            <person name="DeBoy R.T."/>
            <person name="Dodson R.J."/>
            <person name="Durkin A.S."/>
            <person name="Haft D.H."/>
            <person name="Kolonay J.F."/>
            <person name="Madupu R."/>
            <person name="Peterson J.D."/>
            <person name="Umayam L.A."/>
            <person name="White O."/>
            <person name="Wolf A.M."/>
            <person name="Vamathevan J.J."/>
            <person name="Weidman J.F."/>
            <person name="Impraim M."/>
            <person name="Lee K."/>
            <person name="Berry K.J."/>
            <person name="Lee C."/>
            <person name="Mueller J."/>
            <person name="Khouri H.M."/>
            <person name="Gill J."/>
            <person name="Utterback T.R."/>
            <person name="McDonald L.A."/>
            <person name="Feldblyum T.V."/>
            <person name="Smith H.O."/>
            <person name="Venter J.C."/>
            <person name="Nealson K.H."/>
            <person name="Fraser C.M."/>
        </authorList>
    </citation>
    <scope>NUCLEOTIDE SEQUENCE [LARGE SCALE GENOMIC DNA]</scope>
    <source>
        <strain>ATCC 700550 / JCM 31522 / CIP 106686 / LMG 19005 / NCIMB 14063 / MR-1</strain>
    </source>
</reference>
<proteinExistence type="inferred from homology"/>
<feature type="chain" id="PRO_1000013550" description="Ion-translocating oxidoreductase complex subunit A">
    <location>
        <begin position="1"/>
        <end position="192"/>
    </location>
</feature>
<feature type="transmembrane region" description="Helical" evidence="1">
    <location>
        <begin position="5"/>
        <end position="25"/>
    </location>
</feature>
<feature type="transmembrane region" description="Helical" evidence="1">
    <location>
        <begin position="39"/>
        <end position="59"/>
    </location>
</feature>
<feature type="transmembrane region" description="Helical" evidence="1">
    <location>
        <begin position="65"/>
        <end position="85"/>
    </location>
</feature>
<feature type="transmembrane region" description="Helical" evidence="1">
    <location>
        <begin position="102"/>
        <end position="122"/>
    </location>
</feature>
<feature type="transmembrane region" description="Helical" evidence="1">
    <location>
        <begin position="134"/>
        <end position="154"/>
    </location>
</feature>
<feature type="transmembrane region" description="Helical" evidence="1">
    <location>
        <begin position="171"/>
        <end position="191"/>
    </location>
</feature>
<dbReference type="EC" id="7.-.-.-" evidence="1"/>
<dbReference type="EMBL" id="AE014299">
    <property type="protein sequence ID" value="AAN55539.1"/>
    <property type="molecule type" value="Genomic_DNA"/>
</dbReference>
<dbReference type="RefSeq" id="NP_718095.1">
    <property type="nucleotide sequence ID" value="NC_004347.2"/>
</dbReference>
<dbReference type="RefSeq" id="WP_011072471.1">
    <property type="nucleotide sequence ID" value="NC_004347.2"/>
</dbReference>
<dbReference type="SMR" id="Q8EE81"/>
<dbReference type="STRING" id="211586.SO_2508"/>
<dbReference type="PaxDb" id="211586-SO_2508"/>
<dbReference type="KEGG" id="son:SO_2508"/>
<dbReference type="PATRIC" id="fig|211586.12.peg.2414"/>
<dbReference type="eggNOG" id="COG4657">
    <property type="taxonomic scope" value="Bacteria"/>
</dbReference>
<dbReference type="HOGENOM" id="CLU_095255_1_0_6"/>
<dbReference type="OrthoDB" id="9803631at2"/>
<dbReference type="PhylomeDB" id="Q8EE81"/>
<dbReference type="BioCyc" id="SONE211586:G1GMP-2299-MONOMER"/>
<dbReference type="Proteomes" id="UP000008186">
    <property type="component" value="Chromosome"/>
</dbReference>
<dbReference type="GO" id="GO:0005886">
    <property type="term" value="C:plasma membrane"/>
    <property type="evidence" value="ECO:0000318"/>
    <property type="project" value="GO_Central"/>
</dbReference>
<dbReference type="GO" id="GO:0022900">
    <property type="term" value="P:electron transport chain"/>
    <property type="evidence" value="ECO:0007669"/>
    <property type="project" value="UniProtKB-UniRule"/>
</dbReference>
<dbReference type="HAMAP" id="MF_00459">
    <property type="entry name" value="RsxA_RnfA"/>
    <property type="match status" value="1"/>
</dbReference>
<dbReference type="InterPro" id="IPR011293">
    <property type="entry name" value="Ion_transpt_RnfA/RsxA"/>
</dbReference>
<dbReference type="InterPro" id="IPR003667">
    <property type="entry name" value="NqrDE/RnfAE"/>
</dbReference>
<dbReference type="InterPro" id="IPR050133">
    <property type="entry name" value="NqrDE/RnfAE_oxidrdctase"/>
</dbReference>
<dbReference type="NCBIfam" id="NF003481">
    <property type="entry name" value="PRK05151.1"/>
    <property type="match status" value="1"/>
</dbReference>
<dbReference type="NCBIfam" id="TIGR01943">
    <property type="entry name" value="rnfA"/>
    <property type="match status" value="1"/>
</dbReference>
<dbReference type="PANTHER" id="PTHR30335">
    <property type="entry name" value="INTEGRAL MEMBRANE PROTEIN OF SOXR-REDUCING COMPLEX"/>
    <property type="match status" value="1"/>
</dbReference>
<dbReference type="PANTHER" id="PTHR30335:SF0">
    <property type="entry name" value="ION-TRANSLOCATING OXIDOREDUCTASE COMPLEX SUBUNIT A"/>
    <property type="match status" value="1"/>
</dbReference>
<dbReference type="Pfam" id="PF02508">
    <property type="entry name" value="Rnf-Nqr"/>
    <property type="match status" value="1"/>
</dbReference>
<dbReference type="PIRSF" id="PIRSF006102">
    <property type="entry name" value="NQR_DE"/>
    <property type="match status" value="1"/>
</dbReference>
<gene>
    <name evidence="1" type="primary">rnfA</name>
    <name type="ordered locus">SO_2508</name>
</gene>
<name>RNFA_SHEON</name>
<comment type="function">
    <text evidence="1">Part of a membrane-bound complex that couples electron transfer with translocation of ions across the membrane.</text>
</comment>
<comment type="subunit">
    <text evidence="1">The complex is composed of six subunits: RnfA, RnfB, RnfC, RnfD, RnfE and RnfG.</text>
</comment>
<comment type="subcellular location">
    <subcellularLocation>
        <location evidence="1">Cell inner membrane</location>
        <topology evidence="1">Multi-pass membrane protein</topology>
    </subcellularLocation>
</comment>
<comment type="similarity">
    <text evidence="1">Belongs to the NqrDE/RnfAE family.</text>
</comment>
<organism>
    <name type="scientific">Shewanella oneidensis (strain ATCC 700550 / JCM 31522 / CIP 106686 / LMG 19005 / NCIMB 14063 / MR-1)</name>
    <dbReference type="NCBI Taxonomy" id="211586"/>
    <lineage>
        <taxon>Bacteria</taxon>
        <taxon>Pseudomonadati</taxon>
        <taxon>Pseudomonadota</taxon>
        <taxon>Gammaproteobacteria</taxon>
        <taxon>Alteromonadales</taxon>
        <taxon>Shewanellaceae</taxon>
        <taxon>Shewanella</taxon>
    </lineage>
</organism>
<accession>Q8EE81</accession>
<keyword id="KW-0997">Cell inner membrane</keyword>
<keyword id="KW-1003">Cell membrane</keyword>
<keyword id="KW-0249">Electron transport</keyword>
<keyword id="KW-0472">Membrane</keyword>
<keyword id="KW-1185">Reference proteome</keyword>
<keyword id="KW-1278">Translocase</keyword>
<keyword id="KW-0812">Transmembrane</keyword>
<keyword id="KW-1133">Transmembrane helix</keyword>
<keyword id="KW-0813">Transport</keyword>